<organism>
    <name type="scientific">Saccharomyces cerevisiae (strain AWRI796)</name>
    <name type="common">Baker's yeast</name>
    <dbReference type="NCBI Taxonomy" id="764097"/>
    <lineage>
        <taxon>Eukaryota</taxon>
        <taxon>Fungi</taxon>
        <taxon>Dikarya</taxon>
        <taxon>Ascomycota</taxon>
        <taxon>Saccharomycotina</taxon>
        <taxon>Saccharomycetes</taxon>
        <taxon>Saccharomycetales</taxon>
        <taxon>Saccharomycetaceae</taxon>
        <taxon>Saccharomyces</taxon>
    </lineage>
</organism>
<dbReference type="EMBL" id="ADVS01000023">
    <property type="protein sequence ID" value="EGA75074.1"/>
    <property type="molecule type" value="Genomic_DNA"/>
</dbReference>
<dbReference type="SMR" id="E7KCH6"/>
<dbReference type="HOGENOM" id="CLU_069890_0_0_1"/>
<dbReference type="OMA" id="FIYAKDF"/>
<dbReference type="OrthoDB" id="4035046at2759"/>
<dbReference type="GO" id="GO:0005737">
    <property type="term" value="C:cytoplasm"/>
    <property type="evidence" value="ECO:0007669"/>
    <property type="project" value="UniProtKB-KW"/>
</dbReference>
<dbReference type="GO" id="GO:0031965">
    <property type="term" value="C:nuclear membrane"/>
    <property type="evidence" value="ECO:0007669"/>
    <property type="project" value="UniProtKB-SubCell"/>
</dbReference>
<dbReference type="GO" id="GO:0005816">
    <property type="term" value="C:spindle pole body"/>
    <property type="evidence" value="ECO:0007669"/>
    <property type="project" value="UniProtKB-SubCell"/>
</dbReference>
<dbReference type="GO" id="GO:0071988">
    <property type="term" value="P:protein localization to spindle pole body"/>
    <property type="evidence" value="ECO:0007669"/>
    <property type="project" value="InterPro"/>
</dbReference>
<dbReference type="GO" id="GO:0030474">
    <property type="term" value="P:spindle pole body duplication"/>
    <property type="evidence" value="ECO:0007669"/>
    <property type="project" value="InterPro"/>
</dbReference>
<dbReference type="InterPro" id="IPR031433">
    <property type="entry name" value="Mps2"/>
</dbReference>
<dbReference type="Pfam" id="PF17060">
    <property type="entry name" value="MPS2"/>
    <property type="match status" value="1"/>
</dbReference>
<comment type="function">
    <text evidence="1">Component of the spindle pole body (SPB) required for insertion of the nascent SPB into the nuclear envelope and for the proper execution of spindle pole body (SPB) duplication.</text>
</comment>
<comment type="subunit">
    <text evidence="1">Interacts with BBP1, MPS3, and SPC24.</text>
</comment>
<comment type="subcellular location">
    <subcellularLocation>
        <location evidence="1">Nucleus membrane</location>
        <topology evidence="1">Single-pass membrane protein</topology>
    </subcellularLocation>
    <subcellularLocation>
        <location evidence="1">Cytoplasm</location>
        <location evidence="1">Cytoskeleton</location>
        <location evidence="1">Microtubule organizing center</location>
        <location evidence="1">Spindle pole body</location>
    </subcellularLocation>
</comment>
<comment type="similarity">
    <text evidence="4">Belongs to the MPS2 family.</text>
</comment>
<evidence type="ECO:0000250" key="1"/>
<evidence type="ECO:0000255" key="2"/>
<evidence type="ECO:0000256" key="3">
    <source>
        <dbReference type="SAM" id="MobiDB-lite"/>
    </source>
</evidence>
<evidence type="ECO:0000305" key="4"/>
<reference key="1">
    <citation type="journal article" date="2011" name="PLoS Genet.">
        <title>Whole-genome comparison reveals novel genetic elements that characterize the genome of industrial strains of Saccharomyces cerevisiae.</title>
        <authorList>
            <person name="Borneman A.R."/>
            <person name="Desany B.A."/>
            <person name="Riches D."/>
            <person name="Affourtit J.P."/>
            <person name="Forgan A.H."/>
            <person name="Pretorius I.S."/>
            <person name="Egholm M."/>
            <person name="Chambers P.J."/>
        </authorList>
    </citation>
    <scope>NUCLEOTIDE SEQUENCE [LARGE SCALE GENOMIC DNA]</scope>
    <source>
        <strain>AWRI796</strain>
    </source>
</reference>
<keyword id="KW-0175">Coiled coil</keyword>
<keyword id="KW-0963">Cytoplasm</keyword>
<keyword id="KW-0206">Cytoskeleton</keyword>
<keyword id="KW-0472">Membrane</keyword>
<keyword id="KW-0539">Nucleus</keyword>
<keyword id="KW-0812">Transmembrane</keyword>
<keyword id="KW-1133">Transmembrane helix</keyword>
<protein>
    <recommendedName>
        <fullName>Monopolar spindle protein 2</fullName>
    </recommendedName>
</protein>
<accession>E7KCH6</accession>
<gene>
    <name type="primary">MPS2</name>
    <name type="synonym">MMC1</name>
    <name type="ORF">AWRI796_1721</name>
</gene>
<feature type="chain" id="PRO_0000409163" description="Monopolar spindle protein 2">
    <location>
        <begin position="1"/>
        <end position="387"/>
    </location>
</feature>
<feature type="transmembrane region" description="Helical" evidence="2">
    <location>
        <begin position="311"/>
        <end position="327"/>
    </location>
</feature>
<feature type="region of interest" description="Disordered" evidence="3">
    <location>
        <begin position="216"/>
        <end position="235"/>
    </location>
</feature>
<feature type="coiled-coil region" evidence="2">
    <location>
        <begin position="157"/>
        <end position="269"/>
    </location>
</feature>
<feature type="compositionally biased region" description="Polar residues" evidence="3">
    <location>
        <begin position="220"/>
        <end position="230"/>
    </location>
</feature>
<proteinExistence type="inferred from homology"/>
<sequence length="387" mass="44558">MSNGAFDAIFEYAWGQIDKPISGDFIYGKDLPKLIEIIENIFQKAQKSGSYELRLPLFSEINKDLFRTFSNTKTFFKIHKEEFDDIFFNLVNHPLREILENAFIGVDSIPSDFIVSMNLNSPSKFLVENKSKNTEGAGISTPRKKLTESPIKLLSRNNIGKALEVQVEELKRELTAKQSLLQENERQVSELKIRLETYQEKYASIQQRFSDLQKARQVEDNQNSSRTSDPGSPLVTGIDQKAILEEFRRRLQRQTDTISFLKDQIRRERGLNCSNDKVSHSKRKHATTDGDGTFKNFISAVPSNIWVKATIRIIVCFALLAGVLPYIRKYVYAHDTPSQNSRLQLSWWENSGILSKIVWFFEDQTDLETEYRSNANVDDAYSRVFGI</sequence>
<name>MPS2_YEASA</name>